<comment type="catalytic activity">
    <reaction evidence="1">
        <text>tRNA(Gly) + glycine + ATP = glycyl-tRNA(Gly) + AMP + diphosphate</text>
        <dbReference type="Rhea" id="RHEA:16013"/>
        <dbReference type="Rhea" id="RHEA-COMP:9664"/>
        <dbReference type="Rhea" id="RHEA-COMP:9683"/>
        <dbReference type="ChEBI" id="CHEBI:30616"/>
        <dbReference type="ChEBI" id="CHEBI:33019"/>
        <dbReference type="ChEBI" id="CHEBI:57305"/>
        <dbReference type="ChEBI" id="CHEBI:78442"/>
        <dbReference type="ChEBI" id="CHEBI:78522"/>
        <dbReference type="ChEBI" id="CHEBI:456215"/>
        <dbReference type="EC" id="6.1.1.14"/>
    </reaction>
</comment>
<comment type="subunit">
    <text evidence="1">Tetramer of two alpha and two beta subunits.</text>
</comment>
<comment type="subcellular location">
    <subcellularLocation>
        <location evidence="1">Cytoplasm</location>
    </subcellularLocation>
</comment>
<comment type="similarity">
    <text evidence="1">Belongs to the class-II aminoacyl-tRNA synthetase family.</text>
</comment>
<accession>Q182B8</accession>
<keyword id="KW-0030">Aminoacyl-tRNA synthetase</keyword>
<keyword id="KW-0067">ATP-binding</keyword>
<keyword id="KW-0963">Cytoplasm</keyword>
<keyword id="KW-0436">Ligase</keyword>
<keyword id="KW-0547">Nucleotide-binding</keyword>
<keyword id="KW-0648">Protein biosynthesis</keyword>
<keyword id="KW-1185">Reference proteome</keyword>
<proteinExistence type="inferred from homology"/>
<dbReference type="EC" id="6.1.1.14" evidence="1"/>
<dbReference type="EMBL" id="AM180355">
    <property type="protein sequence ID" value="CAJ69318.1"/>
    <property type="molecule type" value="Genomic_DNA"/>
</dbReference>
<dbReference type="RefSeq" id="WP_011861551.1">
    <property type="nucleotide sequence ID" value="NZ_JAUPES010000003.1"/>
</dbReference>
<dbReference type="RefSeq" id="YP_001088945.1">
    <property type="nucleotide sequence ID" value="NC_009089.1"/>
</dbReference>
<dbReference type="SMR" id="Q182B8"/>
<dbReference type="STRING" id="272563.CD630_24320"/>
<dbReference type="EnsemblBacteria" id="CAJ69318">
    <property type="protein sequence ID" value="CAJ69318"/>
    <property type="gene ID" value="CD630_24320"/>
</dbReference>
<dbReference type="KEGG" id="cdf:CD630_24320"/>
<dbReference type="KEGG" id="pdc:CDIF630_02675"/>
<dbReference type="PATRIC" id="fig|272563.120.peg.2567"/>
<dbReference type="eggNOG" id="COG0751">
    <property type="taxonomic scope" value="Bacteria"/>
</dbReference>
<dbReference type="OrthoDB" id="9775440at2"/>
<dbReference type="PhylomeDB" id="Q182B8"/>
<dbReference type="BioCyc" id="PDIF272563:G12WB-2584-MONOMER"/>
<dbReference type="Proteomes" id="UP000001978">
    <property type="component" value="Chromosome"/>
</dbReference>
<dbReference type="GO" id="GO:0005829">
    <property type="term" value="C:cytosol"/>
    <property type="evidence" value="ECO:0007669"/>
    <property type="project" value="TreeGrafter"/>
</dbReference>
<dbReference type="GO" id="GO:0004814">
    <property type="term" value="F:arginine-tRNA ligase activity"/>
    <property type="evidence" value="ECO:0007669"/>
    <property type="project" value="InterPro"/>
</dbReference>
<dbReference type="GO" id="GO:0005524">
    <property type="term" value="F:ATP binding"/>
    <property type="evidence" value="ECO:0007669"/>
    <property type="project" value="UniProtKB-UniRule"/>
</dbReference>
<dbReference type="GO" id="GO:0004820">
    <property type="term" value="F:glycine-tRNA ligase activity"/>
    <property type="evidence" value="ECO:0007669"/>
    <property type="project" value="UniProtKB-UniRule"/>
</dbReference>
<dbReference type="GO" id="GO:0006420">
    <property type="term" value="P:arginyl-tRNA aminoacylation"/>
    <property type="evidence" value="ECO:0007669"/>
    <property type="project" value="InterPro"/>
</dbReference>
<dbReference type="GO" id="GO:0006426">
    <property type="term" value="P:glycyl-tRNA aminoacylation"/>
    <property type="evidence" value="ECO:0007669"/>
    <property type="project" value="UniProtKB-UniRule"/>
</dbReference>
<dbReference type="HAMAP" id="MF_00255">
    <property type="entry name" value="Gly_tRNA_synth_beta"/>
    <property type="match status" value="1"/>
</dbReference>
<dbReference type="InterPro" id="IPR008909">
    <property type="entry name" value="DALR_anticod-bd"/>
</dbReference>
<dbReference type="InterPro" id="IPR015944">
    <property type="entry name" value="Gly-tRNA-synth_bsu"/>
</dbReference>
<dbReference type="InterPro" id="IPR006194">
    <property type="entry name" value="Gly-tRNA-synth_heterodimer"/>
</dbReference>
<dbReference type="NCBIfam" id="TIGR00211">
    <property type="entry name" value="glyS"/>
    <property type="match status" value="1"/>
</dbReference>
<dbReference type="PANTHER" id="PTHR30075:SF2">
    <property type="entry name" value="GLYCINE--TRNA LIGASE, CHLOROPLASTIC_MITOCHONDRIAL 2"/>
    <property type="match status" value="1"/>
</dbReference>
<dbReference type="PANTHER" id="PTHR30075">
    <property type="entry name" value="GLYCYL-TRNA SYNTHETASE"/>
    <property type="match status" value="1"/>
</dbReference>
<dbReference type="Pfam" id="PF05746">
    <property type="entry name" value="DALR_1"/>
    <property type="match status" value="1"/>
</dbReference>
<dbReference type="Pfam" id="PF02092">
    <property type="entry name" value="tRNA_synt_2f"/>
    <property type="match status" value="1"/>
</dbReference>
<dbReference type="PRINTS" id="PR01045">
    <property type="entry name" value="TRNASYNTHGB"/>
</dbReference>
<dbReference type="SUPFAM" id="SSF109604">
    <property type="entry name" value="HD-domain/PDEase-like"/>
    <property type="match status" value="1"/>
</dbReference>
<dbReference type="PROSITE" id="PS50861">
    <property type="entry name" value="AA_TRNA_LIGASE_II_GLYAB"/>
    <property type="match status" value="1"/>
</dbReference>
<reference key="1">
    <citation type="journal article" date="2006" name="Nat. Genet.">
        <title>The multidrug-resistant human pathogen Clostridium difficile has a highly mobile, mosaic genome.</title>
        <authorList>
            <person name="Sebaihia M."/>
            <person name="Wren B.W."/>
            <person name="Mullany P."/>
            <person name="Fairweather N.F."/>
            <person name="Minton N."/>
            <person name="Stabler R."/>
            <person name="Thomson N.R."/>
            <person name="Roberts A.P."/>
            <person name="Cerdeno-Tarraga A.M."/>
            <person name="Wang H."/>
            <person name="Holden M.T.G."/>
            <person name="Wright A."/>
            <person name="Churcher C."/>
            <person name="Quail M.A."/>
            <person name="Baker S."/>
            <person name="Bason N."/>
            <person name="Brooks K."/>
            <person name="Chillingworth T."/>
            <person name="Cronin A."/>
            <person name="Davis P."/>
            <person name="Dowd L."/>
            <person name="Fraser A."/>
            <person name="Feltwell T."/>
            <person name="Hance Z."/>
            <person name="Holroyd S."/>
            <person name="Jagels K."/>
            <person name="Moule S."/>
            <person name="Mungall K."/>
            <person name="Price C."/>
            <person name="Rabbinowitsch E."/>
            <person name="Sharp S."/>
            <person name="Simmonds M."/>
            <person name="Stevens K."/>
            <person name="Unwin L."/>
            <person name="Whithead S."/>
            <person name="Dupuy B."/>
            <person name="Dougan G."/>
            <person name="Barrell B."/>
            <person name="Parkhill J."/>
        </authorList>
    </citation>
    <scope>NUCLEOTIDE SEQUENCE [LARGE SCALE GENOMIC DNA]</scope>
    <source>
        <strain>630</strain>
    </source>
</reference>
<gene>
    <name evidence="1" type="primary">glyS</name>
    <name type="ordered locus">CD630_24320</name>
</gene>
<organism>
    <name type="scientific">Clostridioides difficile (strain 630)</name>
    <name type="common">Peptoclostridium difficile</name>
    <dbReference type="NCBI Taxonomy" id="272563"/>
    <lineage>
        <taxon>Bacteria</taxon>
        <taxon>Bacillati</taxon>
        <taxon>Bacillota</taxon>
        <taxon>Clostridia</taxon>
        <taxon>Peptostreptococcales</taxon>
        <taxon>Peptostreptococcaceae</taxon>
        <taxon>Clostridioides</taxon>
    </lineage>
</organism>
<feature type="chain" id="PRO_1000101268" description="Glycine--tRNA ligase beta subunit">
    <location>
        <begin position="1"/>
        <end position="688"/>
    </location>
</feature>
<sequence length="688" mass="78470">MKNYLLFEIGVEEMPSRFVGSTLEQLKNNLSKLFDENRIAFDKINAYGTPRRLTLVVEGLSDRQNDLEEEIKGPAKKIAVDAENNLTKPALGFIKSKGLSESDIYFKQVGKEEYIFATIKQDGKETSEVLKDILPETIKSVVFPKAMRWGGKNLKFARPIRWIVALLNDKVLEFDLEGIISSNVTKGHRFLGESTIEVDSIEDYFEKLEKNYIVLDQNKRKEMIRKQCIEVANSLGGEVEFDEDLLEEVTYLVEYPTAFYGEFDVDYIKLPKEVVITPMKQHQRYFPVLKEGKLLPNFIAVRNGDSYRIDNVKAGNEKVLEARLADALFFYREDTKRNLESYIEKLKTVVFQVKLGTIYDKTLRLEKLSADILDSLGLVDEKTDTIRAAKLSKADLVTGMVGEFDELQGFMGKEYAKVGGENDVVSEAIFEHYLPRFAGDILPKTNAGVALSIADKLDSIAGFFAIGIQPTGSQDPYALRRQALGILSILMDRKVAVDIKVLIEHALDNYSELDFDKEEVVEQIMNFFNERVKNLFKDLGIRYDVVDAVLSSDINDVSDMHMRALELNNWLEKDELVEMLTAFNRVSTLAQKAESDKIDESLLKEDAEIKLYNEFKQVKIKVNELLKDKKYGIALDEFASLRPVVDNLFDTVMVMDNDEAIKNNRLALLKQVYDTMLEICDLSKIVYK</sequence>
<name>SYGB_CLOD6</name>
<evidence type="ECO:0000255" key="1">
    <source>
        <dbReference type="HAMAP-Rule" id="MF_00255"/>
    </source>
</evidence>
<protein>
    <recommendedName>
        <fullName evidence="1">Glycine--tRNA ligase beta subunit</fullName>
        <ecNumber evidence="1">6.1.1.14</ecNumber>
    </recommendedName>
    <alternativeName>
        <fullName evidence="1">Glycyl-tRNA synthetase beta subunit</fullName>
        <shortName evidence="1">GlyRS</shortName>
    </alternativeName>
</protein>